<sequence>MSMSDPIADMLTRIRNAQQVDKTTVTMPASKLKVAIATVLKDEGYIDGYSVKGTQAKPELEITLKYYAGRPVIERIERVSRPGLRIYKGRTSIPQVMNGLGVAIVSTSRGVMTDRKARANGVGGEVLCYVA</sequence>
<name>RS8_BORBR</name>
<reference key="1">
    <citation type="journal article" date="2003" name="Nat. Genet.">
        <title>Comparative analysis of the genome sequences of Bordetella pertussis, Bordetella parapertussis and Bordetella bronchiseptica.</title>
        <authorList>
            <person name="Parkhill J."/>
            <person name="Sebaihia M."/>
            <person name="Preston A."/>
            <person name="Murphy L.D."/>
            <person name="Thomson N.R."/>
            <person name="Harris D.E."/>
            <person name="Holden M.T.G."/>
            <person name="Churcher C.M."/>
            <person name="Bentley S.D."/>
            <person name="Mungall K.L."/>
            <person name="Cerdeno-Tarraga A.-M."/>
            <person name="Temple L."/>
            <person name="James K.D."/>
            <person name="Harris B."/>
            <person name="Quail M.A."/>
            <person name="Achtman M."/>
            <person name="Atkin R."/>
            <person name="Baker S."/>
            <person name="Basham D."/>
            <person name="Bason N."/>
            <person name="Cherevach I."/>
            <person name="Chillingworth T."/>
            <person name="Collins M."/>
            <person name="Cronin A."/>
            <person name="Davis P."/>
            <person name="Doggett J."/>
            <person name="Feltwell T."/>
            <person name="Goble A."/>
            <person name="Hamlin N."/>
            <person name="Hauser H."/>
            <person name="Holroyd S."/>
            <person name="Jagels K."/>
            <person name="Leather S."/>
            <person name="Moule S."/>
            <person name="Norberczak H."/>
            <person name="O'Neil S."/>
            <person name="Ormond D."/>
            <person name="Price C."/>
            <person name="Rabbinowitsch E."/>
            <person name="Rutter S."/>
            <person name="Sanders M."/>
            <person name="Saunders D."/>
            <person name="Seeger K."/>
            <person name="Sharp S."/>
            <person name="Simmonds M."/>
            <person name="Skelton J."/>
            <person name="Squares R."/>
            <person name="Squares S."/>
            <person name="Stevens K."/>
            <person name="Unwin L."/>
            <person name="Whitehead S."/>
            <person name="Barrell B.G."/>
            <person name="Maskell D.J."/>
        </authorList>
    </citation>
    <scope>NUCLEOTIDE SEQUENCE [LARGE SCALE GENOMIC DNA]</scope>
    <source>
        <strain>ATCC BAA-588 / NCTC 13252 / RB50</strain>
    </source>
</reference>
<gene>
    <name evidence="1" type="primary">rpsH</name>
    <name type="ordered locus">BB0045</name>
</gene>
<proteinExistence type="inferred from homology"/>
<protein>
    <recommendedName>
        <fullName evidence="1">Small ribosomal subunit protein uS8</fullName>
    </recommendedName>
    <alternativeName>
        <fullName evidence="2">30S ribosomal protein S8</fullName>
    </alternativeName>
</protein>
<dbReference type="EMBL" id="BX640437">
    <property type="protein sequence ID" value="CAE30547.1"/>
    <property type="molecule type" value="Genomic_DNA"/>
</dbReference>
<dbReference type="RefSeq" id="WP_003806920.1">
    <property type="nucleotide sequence ID" value="NC_002927.3"/>
</dbReference>
<dbReference type="SMR" id="Q7WRA9"/>
<dbReference type="GeneID" id="93206275"/>
<dbReference type="KEGG" id="bbr:BB0045"/>
<dbReference type="eggNOG" id="COG0096">
    <property type="taxonomic scope" value="Bacteria"/>
</dbReference>
<dbReference type="HOGENOM" id="CLU_098428_0_0_4"/>
<dbReference type="Proteomes" id="UP000001027">
    <property type="component" value="Chromosome"/>
</dbReference>
<dbReference type="GO" id="GO:1990904">
    <property type="term" value="C:ribonucleoprotein complex"/>
    <property type="evidence" value="ECO:0007669"/>
    <property type="project" value="UniProtKB-KW"/>
</dbReference>
<dbReference type="GO" id="GO:0005840">
    <property type="term" value="C:ribosome"/>
    <property type="evidence" value="ECO:0007669"/>
    <property type="project" value="UniProtKB-KW"/>
</dbReference>
<dbReference type="GO" id="GO:0019843">
    <property type="term" value="F:rRNA binding"/>
    <property type="evidence" value="ECO:0007669"/>
    <property type="project" value="UniProtKB-UniRule"/>
</dbReference>
<dbReference type="GO" id="GO:0003735">
    <property type="term" value="F:structural constituent of ribosome"/>
    <property type="evidence" value="ECO:0007669"/>
    <property type="project" value="InterPro"/>
</dbReference>
<dbReference type="GO" id="GO:0006412">
    <property type="term" value="P:translation"/>
    <property type="evidence" value="ECO:0007669"/>
    <property type="project" value="UniProtKB-UniRule"/>
</dbReference>
<dbReference type="FunFam" id="3.30.1370.30:FF:000003">
    <property type="entry name" value="30S ribosomal protein S8"/>
    <property type="match status" value="1"/>
</dbReference>
<dbReference type="FunFam" id="3.30.1490.10:FF:000001">
    <property type="entry name" value="30S ribosomal protein S8"/>
    <property type="match status" value="1"/>
</dbReference>
<dbReference type="Gene3D" id="3.30.1370.30">
    <property type="match status" value="1"/>
</dbReference>
<dbReference type="Gene3D" id="3.30.1490.10">
    <property type="match status" value="1"/>
</dbReference>
<dbReference type="HAMAP" id="MF_01302_B">
    <property type="entry name" value="Ribosomal_uS8_B"/>
    <property type="match status" value="1"/>
</dbReference>
<dbReference type="InterPro" id="IPR000630">
    <property type="entry name" value="Ribosomal_uS8"/>
</dbReference>
<dbReference type="InterPro" id="IPR047863">
    <property type="entry name" value="Ribosomal_uS8_CS"/>
</dbReference>
<dbReference type="InterPro" id="IPR035987">
    <property type="entry name" value="Ribosomal_uS8_sf"/>
</dbReference>
<dbReference type="NCBIfam" id="NF001109">
    <property type="entry name" value="PRK00136.1"/>
    <property type="match status" value="1"/>
</dbReference>
<dbReference type="PANTHER" id="PTHR11758">
    <property type="entry name" value="40S RIBOSOMAL PROTEIN S15A"/>
    <property type="match status" value="1"/>
</dbReference>
<dbReference type="Pfam" id="PF00410">
    <property type="entry name" value="Ribosomal_S8"/>
    <property type="match status" value="1"/>
</dbReference>
<dbReference type="SUPFAM" id="SSF56047">
    <property type="entry name" value="Ribosomal protein S8"/>
    <property type="match status" value="1"/>
</dbReference>
<dbReference type="PROSITE" id="PS00053">
    <property type="entry name" value="RIBOSOMAL_S8"/>
    <property type="match status" value="1"/>
</dbReference>
<feature type="chain" id="PRO_0000126372" description="Small ribosomal subunit protein uS8">
    <location>
        <begin position="1"/>
        <end position="131"/>
    </location>
</feature>
<evidence type="ECO:0000255" key="1">
    <source>
        <dbReference type="HAMAP-Rule" id="MF_01302"/>
    </source>
</evidence>
<evidence type="ECO:0000305" key="2"/>
<keyword id="KW-0687">Ribonucleoprotein</keyword>
<keyword id="KW-0689">Ribosomal protein</keyword>
<keyword id="KW-0694">RNA-binding</keyword>
<keyword id="KW-0699">rRNA-binding</keyword>
<organism>
    <name type="scientific">Bordetella bronchiseptica (strain ATCC BAA-588 / NCTC 13252 / RB50)</name>
    <name type="common">Alcaligenes bronchisepticus</name>
    <dbReference type="NCBI Taxonomy" id="257310"/>
    <lineage>
        <taxon>Bacteria</taxon>
        <taxon>Pseudomonadati</taxon>
        <taxon>Pseudomonadota</taxon>
        <taxon>Betaproteobacteria</taxon>
        <taxon>Burkholderiales</taxon>
        <taxon>Alcaligenaceae</taxon>
        <taxon>Bordetella</taxon>
    </lineage>
</organism>
<accession>Q7WRA9</accession>
<comment type="function">
    <text evidence="1">One of the primary rRNA binding proteins, it binds directly to 16S rRNA central domain where it helps coordinate assembly of the platform of the 30S subunit.</text>
</comment>
<comment type="subunit">
    <text evidence="1">Part of the 30S ribosomal subunit. Contacts proteins S5 and S12.</text>
</comment>
<comment type="similarity">
    <text evidence="1">Belongs to the universal ribosomal protein uS8 family.</text>
</comment>